<feature type="chain" id="PRO_0000414624" description="Structural protein ORF10">
    <location>
        <begin position="1"/>
        <end position="173"/>
    </location>
</feature>
<reference evidence="3" key="1">
    <citation type="journal article" date="2009" name="Microbiol. Immunol.">
        <title>Blood kinetics of four intraperitoneally administered therapeutic candidate bacteriophages in healthy and neutropenic mice.</title>
        <authorList>
            <person name="Uchiyama J."/>
            <person name="Maeda Y."/>
            <person name="Takemura I."/>
            <person name="Chess-Williams R."/>
            <person name="Wakiguchi H."/>
            <person name="Matsuzaki S."/>
        </authorList>
    </citation>
    <scope>NUCLEOTIDE SEQUENCE [GENOMIC DNA]</scope>
</reference>
<reference evidence="2" key="2">
    <citation type="submission" date="2011-09" db="UniProtKB">
        <title>Genetic characterization of Pseudomonas aeruginosa bacteriophage KPP10.</title>
        <authorList>
            <person name="Uchiyama J."/>
            <person name="Takemura I."/>
            <person name="Mohammad R."/>
            <person name="Matsuzaki S."/>
            <person name="Daibata M."/>
        </authorList>
    </citation>
    <scope>PROTEIN SEQUENCE OF 2-21</scope>
</reference>
<organismHost>
    <name type="scientific">Pseudomonas aeruginosa</name>
    <dbReference type="NCBI Taxonomy" id="287"/>
</organismHost>
<keyword id="KW-0903">Direct protein sequencing</keyword>
<keyword id="KW-1185">Reference proteome</keyword>
<keyword id="KW-0946">Virion</keyword>
<organism>
    <name type="scientific">Pseudomonas phage KPP10</name>
    <name type="common">Bacteriophage KPP10</name>
    <dbReference type="NCBI Taxonomy" id="582345"/>
    <lineage>
        <taxon>Viruses</taxon>
        <taxon>Duplodnaviria</taxon>
        <taxon>Heunggongvirae</taxon>
        <taxon>Uroviricota</taxon>
        <taxon>Caudoviricetes</taxon>
        <taxon>Nankokuvirus</taxon>
        <taxon>Nankokuvirus KPP10</taxon>
    </lineage>
</organism>
<comment type="subcellular location">
    <subcellularLocation>
        <location evidence="2">Virion</location>
    </subcellularLocation>
</comment>
<dbReference type="EMBL" id="AB472900">
    <property type="protein sequence ID" value="BAJ09131.1"/>
    <property type="molecule type" value="Genomic_DNA"/>
</dbReference>
<dbReference type="RefSeq" id="YP_004306761.1">
    <property type="nucleotide sequence ID" value="NC_015272.2"/>
</dbReference>
<dbReference type="SMR" id="D6RRG7"/>
<dbReference type="GeneID" id="10358735"/>
<dbReference type="KEGG" id="vg:10358735"/>
<dbReference type="OrthoDB" id="9870at10239"/>
<dbReference type="Proteomes" id="UP000000375">
    <property type="component" value="Genome"/>
</dbReference>
<dbReference type="GO" id="GO:0044423">
    <property type="term" value="C:virion component"/>
    <property type="evidence" value="ECO:0007669"/>
    <property type="project" value="UniProtKB-KW"/>
</dbReference>
<dbReference type="InterPro" id="IPR021695">
    <property type="entry name" value="Phage_KPP10_Orf10"/>
</dbReference>
<dbReference type="NCBIfam" id="NF047581">
    <property type="entry name" value="gp105_phage_fam"/>
    <property type="match status" value="1"/>
</dbReference>
<dbReference type="Pfam" id="PF11681">
    <property type="entry name" value="KPP10_Orf10"/>
    <property type="match status" value="1"/>
</dbReference>
<protein>
    <recommendedName>
        <fullName evidence="1">Structural protein ORF10</fullName>
    </recommendedName>
</protein>
<evidence type="ECO:0000303" key="1">
    <source ref="2"/>
</evidence>
<evidence type="ECO:0000305" key="2"/>
<evidence type="ECO:0000312" key="3">
    <source>
        <dbReference type="EMBL" id="BAJ09131.1"/>
    </source>
</evidence>
<sequence length="173" mass="18809">MAGRTSTYAPNQVTIVINHAASGISHTLTGFSEDSIVSVERLVDTFTEYVGADDTHTRVFNANSGARATVSLAQTSESNDVLTFLHEFDREAMSADGMFEMLIKDNSGRSLYFSDEAYIAVIPQGGFSNQMNTRDWVISMTNTTFQHGGNQKVSPATADTLTALGVNLDARWL</sequence>
<proteinExistence type="evidence at protein level"/>
<accession>D6RRG7</accession>
<name>ORF10_BPKPP</name>